<gene>
    <name evidence="1" type="primary">pdxJ</name>
    <name type="ordered locus">PputGB1_4371</name>
</gene>
<accession>B0KV24</accession>
<dbReference type="EC" id="2.6.99.2" evidence="1"/>
<dbReference type="EMBL" id="CP000926">
    <property type="protein sequence ID" value="ABZ00260.1"/>
    <property type="molecule type" value="Genomic_DNA"/>
</dbReference>
<dbReference type="RefSeq" id="WP_012273924.1">
    <property type="nucleotide sequence ID" value="NC_010322.1"/>
</dbReference>
<dbReference type="SMR" id="B0KV24"/>
<dbReference type="KEGG" id="ppg:PputGB1_4371"/>
<dbReference type="eggNOG" id="COG0854">
    <property type="taxonomic scope" value="Bacteria"/>
</dbReference>
<dbReference type="HOGENOM" id="CLU_074563_0_0_6"/>
<dbReference type="UniPathway" id="UPA00244">
    <property type="reaction ID" value="UER00313"/>
</dbReference>
<dbReference type="Proteomes" id="UP000002157">
    <property type="component" value="Chromosome"/>
</dbReference>
<dbReference type="GO" id="GO:0005829">
    <property type="term" value="C:cytosol"/>
    <property type="evidence" value="ECO:0007669"/>
    <property type="project" value="TreeGrafter"/>
</dbReference>
<dbReference type="GO" id="GO:0033856">
    <property type="term" value="F:pyridoxine 5'-phosphate synthase activity"/>
    <property type="evidence" value="ECO:0007669"/>
    <property type="project" value="UniProtKB-EC"/>
</dbReference>
<dbReference type="GO" id="GO:0008615">
    <property type="term" value="P:pyridoxine biosynthetic process"/>
    <property type="evidence" value="ECO:0007669"/>
    <property type="project" value="UniProtKB-UniRule"/>
</dbReference>
<dbReference type="CDD" id="cd00003">
    <property type="entry name" value="PNPsynthase"/>
    <property type="match status" value="1"/>
</dbReference>
<dbReference type="FunFam" id="3.20.20.70:FF:000042">
    <property type="entry name" value="Pyridoxine 5'-phosphate synthase"/>
    <property type="match status" value="1"/>
</dbReference>
<dbReference type="Gene3D" id="3.20.20.70">
    <property type="entry name" value="Aldolase class I"/>
    <property type="match status" value="1"/>
</dbReference>
<dbReference type="HAMAP" id="MF_00279">
    <property type="entry name" value="PdxJ"/>
    <property type="match status" value="1"/>
</dbReference>
<dbReference type="InterPro" id="IPR013785">
    <property type="entry name" value="Aldolase_TIM"/>
</dbReference>
<dbReference type="InterPro" id="IPR004569">
    <property type="entry name" value="PyrdxlP_synth_PdxJ"/>
</dbReference>
<dbReference type="InterPro" id="IPR036130">
    <property type="entry name" value="Pyridoxine-5'_phos_synth"/>
</dbReference>
<dbReference type="NCBIfam" id="TIGR00559">
    <property type="entry name" value="pdxJ"/>
    <property type="match status" value="1"/>
</dbReference>
<dbReference type="NCBIfam" id="NF003623">
    <property type="entry name" value="PRK05265.1-1"/>
    <property type="match status" value="1"/>
</dbReference>
<dbReference type="NCBIfam" id="NF003625">
    <property type="entry name" value="PRK05265.1-3"/>
    <property type="match status" value="1"/>
</dbReference>
<dbReference type="NCBIfam" id="NF003627">
    <property type="entry name" value="PRK05265.1-5"/>
    <property type="match status" value="1"/>
</dbReference>
<dbReference type="PANTHER" id="PTHR30456">
    <property type="entry name" value="PYRIDOXINE 5'-PHOSPHATE SYNTHASE"/>
    <property type="match status" value="1"/>
</dbReference>
<dbReference type="PANTHER" id="PTHR30456:SF0">
    <property type="entry name" value="PYRIDOXINE 5'-PHOSPHATE SYNTHASE"/>
    <property type="match status" value="1"/>
</dbReference>
<dbReference type="Pfam" id="PF03740">
    <property type="entry name" value="PdxJ"/>
    <property type="match status" value="1"/>
</dbReference>
<dbReference type="SUPFAM" id="SSF63892">
    <property type="entry name" value="Pyridoxine 5'-phosphate synthase"/>
    <property type="match status" value="1"/>
</dbReference>
<reference key="1">
    <citation type="submission" date="2008-01" db="EMBL/GenBank/DDBJ databases">
        <title>Complete sequence of Pseudomonas putida GB-1.</title>
        <authorList>
            <consortium name="US DOE Joint Genome Institute"/>
            <person name="Copeland A."/>
            <person name="Lucas S."/>
            <person name="Lapidus A."/>
            <person name="Barry K."/>
            <person name="Glavina del Rio T."/>
            <person name="Dalin E."/>
            <person name="Tice H."/>
            <person name="Pitluck S."/>
            <person name="Bruce D."/>
            <person name="Goodwin L."/>
            <person name="Chertkov O."/>
            <person name="Brettin T."/>
            <person name="Detter J.C."/>
            <person name="Han C."/>
            <person name="Kuske C.R."/>
            <person name="Schmutz J."/>
            <person name="Larimer F."/>
            <person name="Land M."/>
            <person name="Hauser L."/>
            <person name="Kyrpides N."/>
            <person name="Kim E."/>
            <person name="McCarthy J.K."/>
            <person name="Richardson P."/>
        </authorList>
    </citation>
    <scope>NUCLEOTIDE SEQUENCE [LARGE SCALE GENOMIC DNA]</scope>
    <source>
        <strain>GB-1</strain>
    </source>
</reference>
<feature type="chain" id="PRO_1000078822" description="Pyridoxine 5'-phosphate synthase">
    <location>
        <begin position="1"/>
        <end position="246"/>
    </location>
</feature>
<feature type="active site" description="Proton acceptor" evidence="1">
    <location>
        <position position="48"/>
    </location>
</feature>
<feature type="active site" description="Proton acceptor" evidence="1">
    <location>
        <position position="75"/>
    </location>
</feature>
<feature type="active site" description="Proton donor" evidence="1">
    <location>
        <position position="196"/>
    </location>
</feature>
<feature type="binding site" evidence="1">
    <location>
        <position position="12"/>
    </location>
    <ligand>
        <name>3-amino-2-oxopropyl phosphate</name>
        <dbReference type="ChEBI" id="CHEBI:57279"/>
    </ligand>
</feature>
<feature type="binding site" evidence="1">
    <location>
        <begin position="14"/>
        <end position="15"/>
    </location>
    <ligand>
        <name>1-deoxy-D-xylulose 5-phosphate</name>
        <dbReference type="ChEBI" id="CHEBI:57792"/>
    </ligand>
</feature>
<feature type="binding site" evidence="1">
    <location>
        <position position="23"/>
    </location>
    <ligand>
        <name>3-amino-2-oxopropyl phosphate</name>
        <dbReference type="ChEBI" id="CHEBI:57279"/>
    </ligand>
</feature>
<feature type="binding site" evidence="1">
    <location>
        <position position="50"/>
    </location>
    <ligand>
        <name>1-deoxy-D-xylulose 5-phosphate</name>
        <dbReference type="ChEBI" id="CHEBI:57792"/>
    </ligand>
</feature>
<feature type="binding site" evidence="1">
    <location>
        <position position="55"/>
    </location>
    <ligand>
        <name>1-deoxy-D-xylulose 5-phosphate</name>
        <dbReference type="ChEBI" id="CHEBI:57792"/>
    </ligand>
</feature>
<feature type="binding site" evidence="1">
    <location>
        <position position="105"/>
    </location>
    <ligand>
        <name>1-deoxy-D-xylulose 5-phosphate</name>
        <dbReference type="ChEBI" id="CHEBI:57792"/>
    </ligand>
</feature>
<feature type="binding site" evidence="1">
    <location>
        <position position="197"/>
    </location>
    <ligand>
        <name>3-amino-2-oxopropyl phosphate</name>
        <dbReference type="ChEBI" id="CHEBI:57279"/>
    </ligand>
</feature>
<feature type="binding site" evidence="1">
    <location>
        <begin position="218"/>
        <end position="219"/>
    </location>
    <ligand>
        <name>3-amino-2-oxopropyl phosphate</name>
        <dbReference type="ChEBI" id="CHEBI:57279"/>
    </ligand>
</feature>
<feature type="site" description="Transition state stabilizer" evidence="1">
    <location>
        <position position="156"/>
    </location>
</feature>
<keyword id="KW-0963">Cytoplasm</keyword>
<keyword id="KW-0664">Pyridoxine biosynthesis</keyword>
<keyword id="KW-0808">Transferase</keyword>
<evidence type="ECO:0000255" key="1">
    <source>
        <dbReference type="HAMAP-Rule" id="MF_00279"/>
    </source>
</evidence>
<protein>
    <recommendedName>
        <fullName evidence="1">Pyridoxine 5'-phosphate synthase</fullName>
        <shortName evidence="1">PNP synthase</shortName>
        <ecNumber evidence="1">2.6.99.2</ecNumber>
    </recommendedName>
</protein>
<name>PDXJ_PSEPG</name>
<proteinExistence type="inferred from homology"/>
<comment type="function">
    <text evidence="1">Catalyzes the complicated ring closure reaction between the two acyclic compounds 1-deoxy-D-xylulose-5-phosphate (DXP) and 3-amino-2-oxopropyl phosphate (1-amino-acetone-3-phosphate or AAP) to form pyridoxine 5'-phosphate (PNP) and inorganic phosphate.</text>
</comment>
<comment type="catalytic activity">
    <reaction evidence="1">
        <text>3-amino-2-oxopropyl phosphate + 1-deoxy-D-xylulose 5-phosphate = pyridoxine 5'-phosphate + phosphate + 2 H2O + H(+)</text>
        <dbReference type="Rhea" id="RHEA:15265"/>
        <dbReference type="ChEBI" id="CHEBI:15377"/>
        <dbReference type="ChEBI" id="CHEBI:15378"/>
        <dbReference type="ChEBI" id="CHEBI:43474"/>
        <dbReference type="ChEBI" id="CHEBI:57279"/>
        <dbReference type="ChEBI" id="CHEBI:57792"/>
        <dbReference type="ChEBI" id="CHEBI:58589"/>
        <dbReference type="EC" id="2.6.99.2"/>
    </reaction>
</comment>
<comment type="pathway">
    <text evidence="1">Cofactor biosynthesis; pyridoxine 5'-phosphate biosynthesis; pyridoxine 5'-phosphate from D-erythrose 4-phosphate: step 5/5.</text>
</comment>
<comment type="subunit">
    <text evidence="1">Homooctamer; tetramer of dimers.</text>
</comment>
<comment type="subcellular location">
    <subcellularLocation>
        <location evidence="1">Cytoplasm</location>
    </subcellularLocation>
</comment>
<comment type="similarity">
    <text evidence="1">Belongs to the PNP synthase family.</text>
</comment>
<sequence>MTHSNRMLLGVNIDHVATLRQARGTRYPDPVKAALDAEEAGADGITVHLREDRRHIQERDVVVLKDVLQTRMNFEMGVTEEMMAFAEKIRPAHICLVPETRQELTTEGGLDVAGQEARIKAAVERLARTGAEVSLFIDADERQIEASRRVGAPAIELHTGRYADAQTPTEVAEELKRIVDGVAFGVGQGLIVNAGHGLHYHNVEAVAAIKGINELNIGHALVAHALFVGFKAAVAEMKALIVAASR</sequence>
<organism>
    <name type="scientific">Pseudomonas putida (strain GB-1)</name>
    <dbReference type="NCBI Taxonomy" id="76869"/>
    <lineage>
        <taxon>Bacteria</taxon>
        <taxon>Pseudomonadati</taxon>
        <taxon>Pseudomonadota</taxon>
        <taxon>Gammaproteobacteria</taxon>
        <taxon>Pseudomonadales</taxon>
        <taxon>Pseudomonadaceae</taxon>
        <taxon>Pseudomonas</taxon>
    </lineage>
</organism>